<protein>
    <recommendedName>
        <fullName evidence="1">Heme-degrading monooxygenase</fullName>
        <ecNumber evidence="1">1.14.14.18</ecNumber>
    </recommendedName>
    <alternativeName>
        <fullName evidence="1">Heme oxygenase</fullName>
    </alternativeName>
    <alternativeName>
        <fullName evidence="1">Iron-regulated surface determinant</fullName>
    </alternativeName>
    <alternativeName>
        <fullName evidence="1">Iron-responsive surface determinant</fullName>
    </alternativeName>
</protein>
<keyword id="KW-0963">Cytoplasm</keyword>
<keyword id="KW-0349">Heme</keyword>
<keyword id="KW-0408">Iron</keyword>
<keyword id="KW-0479">Metal-binding</keyword>
<keyword id="KW-0503">Monooxygenase</keyword>
<keyword id="KW-0560">Oxidoreductase</keyword>
<comment type="function">
    <text evidence="1">Allows bacterial pathogens to use the host heme as an iron source. Catalyzes the oxidative degradation of the heme macrocyclic porphyrin ring to the biliverdin in the presence of a suitable electron donor such as ascorbate or NADPH--cytochrome P450 reductase, with subsequent release of free iron.</text>
</comment>
<comment type="catalytic activity">
    <reaction evidence="1">
        <text>heme b + 3 reduced [NADPH--hemoprotein reductase] + 3 O2 = biliverdin IXalpha + CO + Fe(2+) + 3 oxidized [NADPH--hemoprotein reductase] + 3 H2O + H(+)</text>
        <dbReference type="Rhea" id="RHEA:21764"/>
        <dbReference type="Rhea" id="RHEA-COMP:11964"/>
        <dbReference type="Rhea" id="RHEA-COMP:11965"/>
        <dbReference type="ChEBI" id="CHEBI:15377"/>
        <dbReference type="ChEBI" id="CHEBI:15378"/>
        <dbReference type="ChEBI" id="CHEBI:15379"/>
        <dbReference type="ChEBI" id="CHEBI:17245"/>
        <dbReference type="ChEBI" id="CHEBI:29033"/>
        <dbReference type="ChEBI" id="CHEBI:57618"/>
        <dbReference type="ChEBI" id="CHEBI:57991"/>
        <dbReference type="ChEBI" id="CHEBI:58210"/>
        <dbReference type="ChEBI" id="CHEBI:60344"/>
        <dbReference type="EC" id="1.14.14.18"/>
    </reaction>
</comment>
<comment type="subunit">
    <text evidence="1">Homodimer.</text>
</comment>
<comment type="subcellular location">
    <subcellularLocation>
        <location evidence="1">Cytoplasm</location>
    </subcellularLocation>
</comment>
<comment type="similarity">
    <text evidence="1">Belongs to the antibiotic biosynthesis monooxygenase family. Heme-degrading monooxygenase IsdG subfamily.</text>
</comment>
<evidence type="ECO:0000255" key="1">
    <source>
        <dbReference type="HAMAP-Rule" id="MF_01272"/>
    </source>
</evidence>
<evidence type="ECO:0000256" key="2">
    <source>
        <dbReference type="SAM" id="MobiDB-lite"/>
    </source>
</evidence>
<reference key="1">
    <citation type="journal article" date="2011" name="J. Bacteriol.">
        <title>Genome sequence of lineage III Listeria monocytogenes strain HCC23.</title>
        <authorList>
            <person name="Steele C.L."/>
            <person name="Donaldson J.R."/>
            <person name="Paul D."/>
            <person name="Banes M.M."/>
            <person name="Arick T."/>
            <person name="Bridges S.M."/>
            <person name="Lawrence M.L."/>
        </authorList>
    </citation>
    <scope>NUCLEOTIDE SEQUENCE [LARGE SCALE GENOMIC DNA]</scope>
    <source>
        <strain>HCC23</strain>
    </source>
</reference>
<organism>
    <name type="scientific">Listeria monocytogenes serotype 4a (strain HCC23)</name>
    <dbReference type="NCBI Taxonomy" id="552536"/>
    <lineage>
        <taxon>Bacteria</taxon>
        <taxon>Bacillati</taxon>
        <taxon>Bacillota</taxon>
        <taxon>Bacilli</taxon>
        <taxon>Bacillales</taxon>
        <taxon>Listeriaceae</taxon>
        <taxon>Listeria</taxon>
    </lineage>
</organism>
<gene>
    <name evidence="1" type="primary">isdG</name>
    <name type="ordered locus">LMHCC_2158</name>
</gene>
<proteinExistence type="inferred from homology"/>
<sequence length="121" mass="13785">MIIVTNTIKVEKGAAEHVIRQFTGANGDGHPTKDIAEVEGFLGFELWHSKPEDKDYEEVVVTSKWESEEAQRNWVKSDSFKKAHGRTKDTREQREDRKGIVGNAIARFEVVHVQNPVIVEK</sequence>
<accession>B8DCJ3</accession>
<dbReference type="EC" id="1.14.14.18" evidence="1"/>
<dbReference type="EMBL" id="CP001175">
    <property type="protein sequence ID" value="ACK40496.1"/>
    <property type="molecule type" value="Genomic_DNA"/>
</dbReference>
<dbReference type="RefSeq" id="WP_003721271.1">
    <property type="nucleotide sequence ID" value="NC_011660.1"/>
</dbReference>
<dbReference type="SMR" id="B8DCJ3"/>
<dbReference type="GeneID" id="93233935"/>
<dbReference type="KEGG" id="lmh:LMHCC_2158"/>
<dbReference type="HOGENOM" id="CLU_141544_2_0_9"/>
<dbReference type="GO" id="GO:0005737">
    <property type="term" value="C:cytoplasm"/>
    <property type="evidence" value="ECO:0007669"/>
    <property type="project" value="UniProtKB-SubCell"/>
</dbReference>
<dbReference type="GO" id="GO:0020037">
    <property type="term" value="F:heme binding"/>
    <property type="evidence" value="ECO:0007669"/>
    <property type="project" value="UniProtKB-UniRule"/>
</dbReference>
<dbReference type="GO" id="GO:0004392">
    <property type="term" value="F:heme oxygenase (decyclizing) activity"/>
    <property type="evidence" value="ECO:0007669"/>
    <property type="project" value="UniProtKB-UniRule"/>
</dbReference>
<dbReference type="GO" id="GO:0005506">
    <property type="term" value="F:iron ion binding"/>
    <property type="evidence" value="ECO:0007669"/>
    <property type="project" value="UniProtKB-UniRule"/>
</dbReference>
<dbReference type="GO" id="GO:0042167">
    <property type="term" value="P:heme catabolic process"/>
    <property type="evidence" value="ECO:0007669"/>
    <property type="project" value="UniProtKB-UniRule"/>
</dbReference>
<dbReference type="GO" id="GO:0033212">
    <property type="term" value="P:iron import into cell"/>
    <property type="evidence" value="ECO:0007669"/>
    <property type="project" value="InterPro"/>
</dbReference>
<dbReference type="Gene3D" id="3.30.70.100">
    <property type="match status" value="1"/>
</dbReference>
<dbReference type="HAMAP" id="MF_01272">
    <property type="entry name" value="Heme_degrading_monooxygenase"/>
    <property type="match status" value="1"/>
</dbReference>
<dbReference type="InterPro" id="IPR007138">
    <property type="entry name" value="ABM_dom"/>
</dbReference>
<dbReference type="InterPro" id="IPR011008">
    <property type="entry name" value="Dimeric_a/b-barrel"/>
</dbReference>
<dbReference type="InterPro" id="IPR050404">
    <property type="entry name" value="Heme-degrading_MO"/>
</dbReference>
<dbReference type="InterPro" id="IPR023953">
    <property type="entry name" value="IsdG"/>
</dbReference>
<dbReference type="NCBIfam" id="NF009841">
    <property type="entry name" value="PRK13316.1"/>
    <property type="match status" value="1"/>
</dbReference>
<dbReference type="PANTHER" id="PTHR34474:SF4">
    <property type="entry name" value="HEME OXYGENASE (STAPHYLOBILIN-PRODUCING) 1"/>
    <property type="match status" value="1"/>
</dbReference>
<dbReference type="PANTHER" id="PTHR34474">
    <property type="entry name" value="SIGNAL TRANSDUCTION PROTEIN TRAP"/>
    <property type="match status" value="1"/>
</dbReference>
<dbReference type="Pfam" id="PF03992">
    <property type="entry name" value="ABM"/>
    <property type="match status" value="1"/>
</dbReference>
<dbReference type="SUPFAM" id="SSF54909">
    <property type="entry name" value="Dimeric alpha+beta barrel"/>
    <property type="match status" value="1"/>
</dbReference>
<dbReference type="PROSITE" id="PS51725">
    <property type="entry name" value="ABM"/>
    <property type="match status" value="1"/>
</dbReference>
<feature type="chain" id="PRO_1000165181" description="Heme-degrading monooxygenase">
    <location>
        <begin position="1"/>
        <end position="121"/>
    </location>
</feature>
<feature type="domain" description="ABM" evidence="1">
    <location>
        <begin position="2"/>
        <end position="101"/>
    </location>
</feature>
<feature type="region of interest" description="Disordered" evidence="2">
    <location>
        <begin position="76"/>
        <end position="98"/>
    </location>
</feature>
<feature type="compositionally biased region" description="Basic and acidic residues" evidence="2">
    <location>
        <begin position="78"/>
        <end position="98"/>
    </location>
</feature>
<feature type="binding site" evidence="1">
    <location>
        <position position="6"/>
    </location>
    <ligand>
        <name>Fe cation</name>
        <dbReference type="ChEBI" id="CHEBI:24875"/>
    </ligand>
</feature>
<feature type="binding site" description="axial binding residue" evidence="1">
    <location>
        <position position="84"/>
    </location>
    <ligand>
        <name>heme</name>
        <dbReference type="ChEBI" id="CHEBI:30413"/>
    </ligand>
    <ligandPart>
        <name>Fe</name>
        <dbReference type="ChEBI" id="CHEBI:18248"/>
    </ligandPart>
</feature>
<feature type="site" description="Transition state stabilizer" evidence="1">
    <location>
        <position position="74"/>
    </location>
</feature>
<name>HDOX_LISMH</name>